<keyword id="KW-1003">Cell membrane</keyword>
<keyword id="KW-0961">Cell wall biogenesis/degradation</keyword>
<keyword id="KW-0472">Membrane</keyword>
<keyword id="KW-1185">Reference proteome</keyword>
<keyword id="KW-0812">Transmembrane</keyword>
<keyword id="KW-1133">Transmembrane helix</keyword>
<gene>
    <name type="ORF">POPTRDRAFT_763057</name>
</gene>
<feature type="chain" id="PRO_0000391535" description="Casparian strip membrane protein 1">
    <location>
        <begin position="1"/>
        <end position="199"/>
    </location>
</feature>
<feature type="topological domain" description="Cytoplasmic" evidence="2">
    <location>
        <begin position="1"/>
        <end position="37"/>
    </location>
</feature>
<feature type="transmembrane region" description="Helical" evidence="2">
    <location>
        <begin position="38"/>
        <end position="58"/>
    </location>
</feature>
<feature type="topological domain" description="Extracellular" evidence="2">
    <location>
        <begin position="59"/>
        <end position="87"/>
    </location>
</feature>
<feature type="transmembrane region" description="Helical" evidence="2">
    <location>
        <begin position="88"/>
        <end position="108"/>
    </location>
</feature>
<feature type="topological domain" description="Cytoplasmic" evidence="2">
    <location>
        <begin position="109"/>
        <end position="120"/>
    </location>
</feature>
<feature type="transmembrane region" description="Helical" evidence="2">
    <location>
        <begin position="121"/>
        <end position="141"/>
    </location>
</feature>
<feature type="topological domain" description="Extracellular" evidence="2">
    <location>
        <begin position="142"/>
        <end position="173"/>
    </location>
</feature>
<feature type="transmembrane region" description="Helical" evidence="2">
    <location>
        <begin position="174"/>
        <end position="194"/>
    </location>
</feature>
<feature type="topological domain" description="Cytoplasmic" evidence="2">
    <location>
        <begin position="195"/>
        <end position="199"/>
    </location>
</feature>
<dbReference type="EMBL" id="CM009295">
    <property type="protein sequence ID" value="EEE92938.1"/>
    <property type="molecule type" value="Genomic_DNA"/>
</dbReference>
<dbReference type="RefSeq" id="XP_002309415.1">
    <property type="nucleotide sequence ID" value="XM_002309379.1"/>
</dbReference>
<dbReference type="FunCoup" id="B9HBX2">
    <property type="interactions" value="384"/>
</dbReference>
<dbReference type="STRING" id="3694.B9HBX2"/>
<dbReference type="EnsemblPlants" id="Potri.006G208800.1.v4.1">
    <property type="protein sequence ID" value="Potri.006G208800.1.v4.1"/>
    <property type="gene ID" value="Potri.006G208800.v4.1"/>
</dbReference>
<dbReference type="Gramene" id="Potri.006G208800.1.v4.1">
    <property type="protein sequence ID" value="Potri.006G208800.1.v4.1"/>
    <property type="gene ID" value="Potri.006G208800.v4.1"/>
</dbReference>
<dbReference type="KEGG" id="pop:7492240"/>
<dbReference type="eggNOG" id="ENOG502RJHP">
    <property type="taxonomic scope" value="Eukaryota"/>
</dbReference>
<dbReference type="HOGENOM" id="CLU_066104_3_1_1"/>
<dbReference type="InParanoid" id="B9HBX2"/>
<dbReference type="OMA" id="TSANWIA"/>
<dbReference type="OrthoDB" id="753675at2759"/>
<dbReference type="Proteomes" id="UP000006729">
    <property type="component" value="Chromosome 6"/>
</dbReference>
<dbReference type="ExpressionAtlas" id="B9HBX2">
    <property type="expression patterns" value="differential"/>
</dbReference>
<dbReference type="GO" id="GO:0048226">
    <property type="term" value="C:Casparian strip"/>
    <property type="evidence" value="ECO:0000318"/>
    <property type="project" value="GO_Central"/>
</dbReference>
<dbReference type="GO" id="GO:0005886">
    <property type="term" value="C:plasma membrane"/>
    <property type="evidence" value="ECO:0000318"/>
    <property type="project" value="GO_Central"/>
</dbReference>
<dbReference type="GO" id="GO:0042545">
    <property type="term" value="P:cell wall modification"/>
    <property type="evidence" value="ECO:0000318"/>
    <property type="project" value="GO_Central"/>
</dbReference>
<dbReference type="GO" id="GO:0007043">
    <property type="term" value="P:cell-cell junction assembly"/>
    <property type="evidence" value="ECO:0000318"/>
    <property type="project" value="GO_Central"/>
</dbReference>
<dbReference type="InterPro" id="IPR006459">
    <property type="entry name" value="CASP/CASPL"/>
</dbReference>
<dbReference type="InterPro" id="IPR006702">
    <property type="entry name" value="CASP_dom"/>
</dbReference>
<dbReference type="InterPro" id="IPR044173">
    <property type="entry name" value="CASPL"/>
</dbReference>
<dbReference type="NCBIfam" id="TIGR01569">
    <property type="entry name" value="A_tha_TIGR01569"/>
    <property type="match status" value="1"/>
</dbReference>
<dbReference type="PANTHER" id="PTHR36488:SF11">
    <property type="entry name" value="CASP-LIKE PROTEIN"/>
    <property type="match status" value="1"/>
</dbReference>
<dbReference type="PANTHER" id="PTHR36488">
    <property type="entry name" value="CASP-LIKE PROTEIN 1U1"/>
    <property type="match status" value="1"/>
</dbReference>
<dbReference type="Pfam" id="PF04535">
    <property type="entry name" value="CASP_dom"/>
    <property type="match status" value="1"/>
</dbReference>
<organism>
    <name type="scientific">Populus trichocarpa</name>
    <name type="common">Western balsam poplar</name>
    <name type="synonym">Populus balsamifera subsp. trichocarpa</name>
    <dbReference type="NCBI Taxonomy" id="3694"/>
    <lineage>
        <taxon>Eukaryota</taxon>
        <taxon>Viridiplantae</taxon>
        <taxon>Streptophyta</taxon>
        <taxon>Embryophyta</taxon>
        <taxon>Tracheophyta</taxon>
        <taxon>Spermatophyta</taxon>
        <taxon>Magnoliopsida</taxon>
        <taxon>eudicotyledons</taxon>
        <taxon>Gunneridae</taxon>
        <taxon>Pentapetalae</taxon>
        <taxon>rosids</taxon>
        <taxon>fabids</taxon>
        <taxon>Malpighiales</taxon>
        <taxon>Salicaceae</taxon>
        <taxon>Saliceae</taxon>
        <taxon>Populus</taxon>
    </lineage>
</organism>
<proteinExistence type="evidence at transcript level"/>
<reference key="1">
    <citation type="journal article" date="2006" name="Science">
        <title>The genome of black cottonwood, Populus trichocarpa (Torr. &amp; Gray).</title>
        <authorList>
            <person name="Tuskan G.A."/>
            <person name="Difazio S."/>
            <person name="Jansson S."/>
            <person name="Bohlmann J."/>
            <person name="Grigoriev I."/>
            <person name="Hellsten U."/>
            <person name="Putnam N."/>
            <person name="Ralph S."/>
            <person name="Rombauts S."/>
            <person name="Salamov A."/>
            <person name="Schein J."/>
            <person name="Sterck L."/>
            <person name="Aerts A."/>
            <person name="Bhalerao R.R."/>
            <person name="Bhalerao R.P."/>
            <person name="Blaudez D."/>
            <person name="Boerjan W."/>
            <person name="Brun A."/>
            <person name="Brunner A."/>
            <person name="Busov V."/>
            <person name="Campbell M."/>
            <person name="Carlson J."/>
            <person name="Chalot M."/>
            <person name="Chapman J."/>
            <person name="Chen G.-L."/>
            <person name="Cooper D."/>
            <person name="Coutinho P.M."/>
            <person name="Couturier J."/>
            <person name="Covert S."/>
            <person name="Cronk Q."/>
            <person name="Cunningham R."/>
            <person name="Davis J."/>
            <person name="Degroeve S."/>
            <person name="Dejardin A."/>
            <person name="dePamphilis C.W."/>
            <person name="Detter J."/>
            <person name="Dirks B."/>
            <person name="Dubchak I."/>
            <person name="Duplessis S."/>
            <person name="Ehlting J."/>
            <person name="Ellis B."/>
            <person name="Gendler K."/>
            <person name="Goodstein D."/>
            <person name="Gribskov M."/>
            <person name="Grimwood J."/>
            <person name="Groover A."/>
            <person name="Gunter L."/>
            <person name="Hamberger B."/>
            <person name="Heinze B."/>
            <person name="Helariutta Y."/>
            <person name="Henrissat B."/>
            <person name="Holligan D."/>
            <person name="Holt R."/>
            <person name="Huang W."/>
            <person name="Islam-Faridi N."/>
            <person name="Jones S."/>
            <person name="Jones-Rhoades M."/>
            <person name="Jorgensen R."/>
            <person name="Joshi C."/>
            <person name="Kangasjaervi J."/>
            <person name="Karlsson J."/>
            <person name="Kelleher C."/>
            <person name="Kirkpatrick R."/>
            <person name="Kirst M."/>
            <person name="Kohler A."/>
            <person name="Kalluri U."/>
            <person name="Larimer F."/>
            <person name="Leebens-Mack J."/>
            <person name="Leple J.-C."/>
            <person name="Locascio P."/>
            <person name="Lou Y."/>
            <person name="Lucas S."/>
            <person name="Martin F."/>
            <person name="Montanini B."/>
            <person name="Napoli C."/>
            <person name="Nelson D.R."/>
            <person name="Nelson C."/>
            <person name="Nieminen K."/>
            <person name="Nilsson O."/>
            <person name="Pereda V."/>
            <person name="Peter G."/>
            <person name="Philippe R."/>
            <person name="Pilate G."/>
            <person name="Poliakov A."/>
            <person name="Razumovskaya J."/>
            <person name="Richardson P."/>
            <person name="Rinaldi C."/>
            <person name="Ritland K."/>
            <person name="Rouze P."/>
            <person name="Ryaboy D."/>
            <person name="Schmutz J."/>
            <person name="Schrader J."/>
            <person name="Segerman B."/>
            <person name="Shin H."/>
            <person name="Siddiqui A."/>
            <person name="Sterky F."/>
            <person name="Terry A."/>
            <person name="Tsai C.-J."/>
            <person name="Uberbacher E."/>
            <person name="Unneberg P."/>
            <person name="Vahala J."/>
            <person name="Wall K."/>
            <person name="Wessler S."/>
            <person name="Yang G."/>
            <person name="Yin T."/>
            <person name="Douglas C."/>
            <person name="Marra M."/>
            <person name="Sandberg G."/>
            <person name="Van de Peer Y."/>
            <person name="Rokhsar D.S."/>
        </authorList>
    </citation>
    <scope>NUCLEOTIDE SEQUENCE [LARGE SCALE GENOMIC DNA]</scope>
    <source>
        <strain>cv. Nisqually</strain>
    </source>
</reference>
<reference key="2">
    <citation type="submission" date="2008-12" db="EMBL/GenBank/DDBJ databases">
        <authorList>
            <consortium name="US DOE Joint Genome Institute (JGI-PGF)"/>
            <person name="Grigoriev I.V."/>
            <person name="Terry A."/>
            <person name="Salamov A.A."/>
            <person name="Otillar R."/>
            <person name="Lou Y."/>
            <person name="Lucas S."/>
            <person name="Hammon N."/>
            <person name="Glavina del Rio T."/>
            <person name="Detter J."/>
            <person name="Kalin E."/>
            <person name="Tice H."/>
            <person name="Pitluck S."/>
            <person name="Chapman J."/>
            <person name="Putnam N.H."/>
            <person name="Brunner A."/>
            <person name="Busov V."/>
            <person name="Campbell M."/>
            <person name="Chalot M."/>
            <person name="Covert S."/>
            <person name="Davis J."/>
            <person name="DiFazio S."/>
            <person name="Gribskov M."/>
            <person name="Gunter L."/>
            <person name="Hamberger B."/>
            <person name="Jansson S."/>
            <person name="Joshi C."/>
            <person name="Larimer F."/>
            <person name="Martin F."/>
            <person name="Napoli C."/>
            <person name="Nelson D."/>
            <person name="Ralph S."/>
            <person name="Rombauts S."/>
            <person name="Rouze P."/>
            <person name="Schrader J."/>
            <person name="Tsai C."/>
            <person name="Vahala J."/>
            <person name="Tuskan G."/>
            <person name="Rokhsar D."/>
        </authorList>
    </citation>
    <scope>GENOME REANNOTATION</scope>
    <source>
        <strain>cv. Nisqually</strain>
    </source>
</reference>
<reference key="3">
    <citation type="journal article" date="2014" name="Plant Physiol.">
        <title>Functional and evolutionary analysis of the CASPARIAN STRIP MEMBRANE DOMAIN PROTEIN family.</title>
        <authorList>
            <person name="Roppolo D."/>
            <person name="Boeckmann B."/>
            <person name="Pfister A."/>
            <person name="Boutet E."/>
            <person name="Rubio M.C."/>
            <person name="Denervaud-Tendon V."/>
            <person name="Vermeer J.E."/>
            <person name="Gheyselinck J."/>
            <person name="Xenarios I."/>
            <person name="Geldner N."/>
        </authorList>
    </citation>
    <scope>GENE FAMILY</scope>
    <scope>NOMENCLATURE</scope>
</reference>
<name>CASP1_POPTR</name>
<evidence type="ECO:0000250" key="1"/>
<evidence type="ECO:0000255" key="2"/>
<evidence type="ECO:0000305" key="3"/>
<comment type="function">
    <text evidence="1">Regulates membrane-cell wall junctions and localized cell wall deposition. Required for establishment of the Casparian strip membrane domain (CSD) and the subsequent formation of Casparian strips, a cell wall modification of the root endodermis that determines an apoplastic barrier between the intraorganismal apoplasm and the extraorganismal apoplasm and prevents lateral diffusion (By similarity).</text>
</comment>
<comment type="subunit">
    <text evidence="1">Homodimer and heterodimers.</text>
</comment>
<comment type="subcellular location">
    <subcellularLocation>
        <location evidence="1">Cell membrane</location>
        <topology evidence="1">Multi-pass membrane protein</topology>
    </subcellularLocation>
    <text evidence="1">Very restricted localization following a belt shape within the plasma membrane which coincides with the position of the Casparian strip membrane domain in the root endodermis.</text>
</comment>
<comment type="similarity">
    <text evidence="3">Belongs to the Casparian strip membrane proteins (CASP) family.</text>
</comment>
<sequence length="199" mass="21101">MKSESAAIDIPESSSVAKGKAPLIAVSRNEKGGYRKGIAIFDFILRLAAIATALAAAAAMGTSDETLPFFTQFFQFQASYDDLPTFQFFVIAIAIVGGYLVLSLPFSIVAIVRPHAVGPRLLLIILDAVALTLNTAAGAAAAAIVYLAHNGNSNTNWLAICQQYGDFCQKVSGAVVASFITVVIFVFLIVLSAFALRRH</sequence>
<accession>B9HBX2</accession>
<protein>
    <recommendedName>
        <fullName>Casparian strip membrane protein 1</fullName>
        <shortName>PtCASP1</shortName>
    </recommendedName>
</protein>